<accession>P12858</accession>
<gene>
    <name type="primary">GAPA</name>
    <name type="synonym">GPA1</name>
</gene>
<proteinExistence type="evidence at protein level"/>
<comment type="catalytic activity">
    <reaction>
        <text>D-glyceraldehyde 3-phosphate + phosphate + NADP(+) = (2R)-3-phospho-glyceroyl phosphate + NADPH + H(+)</text>
        <dbReference type="Rhea" id="RHEA:10296"/>
        <dbReference type="ChEBI" id="CHEBI:15378"/>
        <dbReference type="ChEBI" id="CHEBI:43474"/>
        <dbReference type="ChEBI" id="CHEBI:57604"/>
        <dbReference type="ChEBI" id="CHEBI:57783"/>
        <dbReference type="ChEBI" id="CHEBI:58349"/>
        <dbReference type="ChEBI" id="CHEBI:59776"/>
        <dbReference type="EC" id="1.2.1.13"/>
    </reaction>
</comment>
<comment type="pathway">
    <text>Carbohydrate biosynthesis; Calvin cycle.</text>
</comment>
<comment type="subunit">
    <text evidence="1">Tetramer of either four A chains (GAPDH 2) or two A and two B chains (GAPDH 1).</text>
</comment>
<comment type="interaction">
    <interactant intactId="EBI-15689968">
        <id>P12858</id>
    </interactant>
    <interactant intactId="EBI-15689988">
        <id>P12859</id>
        <label>GAPB</label>
    </interactant>
    <organismsDiffer>false</organismsDiffer>
    <experiments>2</experiments>
</comment>
<comment type="subcellular location">
    <subcellularLocation>
        <location evidence="1">Plastid</location>
        <location evidence="1">Chloroplast</location>
    </subcellularLocation>
</comment>
<comment type="miscellaneous">
    <text>Plants contain two types of GAPDH: cytosolic forms which participate in glycolysis and chloroplast forms which participate in photosynthesis. All the forms are encoded by distinct genes.</text>
</comment>
<comment type="similarity">
    <text evidence="3">Belongs to the glyceraldehyde-3-phosphate dehydrogenase family.</text>
</comment>
<name>G3PA_PEA</name>
<protein>
    <recommendedName>
        <fullName>Glyceraldehyde-3-phosphate dehydrogenase A, chloroplastic</fullName>
        <ecNumber>1.2.1.13</ecNumber>
    </recommendedName>
    <alternativeName>
        <fullName>NADP-dependent glyceraldehydephosphate dehydrogenase subunit A</fullName>
    </alternativeName>
</protein>
<evidence type="ECO:0000250" key="1"/>
<evidence type="ECO:0000255" key="2">
    <source>
        <dbReference type="PROSITE-ProRule" id="PRU10009"/>
    </source>
</evidence>
<evidence type="ECO:0000305" key="3"/>
<organism>
    <name type="scientific">Pisum sativum</name>
    <name type="common">Garden pea</name>
    <name type="synonym">Lathyrus oleraceus</name>
    <dbReference type="NCBI Taxonomy" id="3888"/>
    <lineage>
        <taxon>Eukaryota</taxon>
        <taxon>Viridiplantae</taxon>
        <taxon>Streptophyta</taxon>
        <taxon>Embryophyta</taxon>
        <taxon>Tracheophyta</taxon>
        <taxon>Spermatophyta</taxon>
        <taxon>Magnoliopsida</taxon>
        <taxon>eudicotyledons</taxon>
        <taxon>Gunneridae</taxon>
        <taxon>Pentapetalae</taxon>
        <taxon>rosids</taxon>
        <taxon>fabids</taxon>
        <taxon>Fabales</taxon>
        <taxon>Fabaceae</taxon>
        <taxon>Papilionoideae</taxon>
        <taxon>50 kb inversion clade</taxon>
        <taxon>NPAAA clade</taxon>
        <taxon>Hologalegina</taxon>
        <taxon>IRL clade</taxon>
        <taxon>Fabeae</taxon>
        <taxon>Pisum</taxon>
    </lineage>
</organism>
<sequence>MASATFSVAKPAIKANGKGFSEFSGLRNSSRHLPFSRKSSDDFHSLVTFQTNAVGSSGGHKKSLVVEAKQLKVAINGFGRIGRNFLRCWHGRKDSPLDVIAINDTGGVKQASHLLKYDSTLGIFDADVKPVGTDGISVDGKVIKVVSDRNPANLPWKELGIDLVIEGTGVFVDREGAGRHITAGAKKVLITAPGKGDIPTYVVGVNADAYTHADDIISNASCTTNCLAPFVKVLDQKFGIIKGTMTTTHSYTGDQRLLDASHRDLRRARAAALNIVPTSTGAAKAVALVLPTLKGKLNGIALRVPTPNVSVVDLVVQVSKKTFAEEVNEAFRESAAKELTGILSVCDEPLVSVDFRCTDVSSTVDSSLTMVMGDDLVKVIAWYDNEWGYSQRVVDLADIVANNWK</sequence>
<feature type="transit peptide" description="Chloroplast">
    <location>
        <begin position="1"/>
        <end position="68"/>
    </location>
</feature>
<feature type="chain" id="PRO_0000010423" description="Glyceraldehyde-3-phosphate dehydrogenase A, chloroplastic">
    <location>
        <begin position="69"/>
        <end position="405"/>
    </location>
</feature>
<feature type="active site" description="Nucleophile" evidence="2">
    <location>
        <position position="222"/>
    </location>
</feature>
<feature type="binding site" evidence="1">
    <location>
        <begin position="80"/>
        <end position="81"/>
    </location>
    <ligand>
        <name>NADP(+)</name>
        <dbReference type="ChEBI" id="CHEBI:58349"/>
    </ligand>
</feature>
<feature type="binding site" evidence="1">
    <location>
        <position position="104"/>
    </location>
    <ligand>
        <name>NADP(+)</name>
        <dbReference type="ChEBI" id="CHEBI:58349"/>
    </ligand>
</feature>
<feature type="binding site" evidence="1">
    <location>
        <position position="149"/>
    </location>
    <ligand>
        <name>NADP(+)</name>
        <dbReference type="ChEBI" id="CHEBI:58349"/>
    </ligand>
</feature>
<feature type="binding site" evidence="1">
    <location>
        <begin position="221"/>
        <end position="223"/>
    </location>
    <ligand>
        <name>D-glyceraldehyde 3-phosphate</name>
        <dbReference type="ChEBI" id="CHEBI:59776"/>
    </ligand>
</feature>
<feature type="binding site" evidence="1">
    <location>
        <position position="252"/>
    </location>
    <ligand>
        <name>D-glyceraldehyde 3-phosphate</name>
        <dbReference type="ChEBI" id="CHEBI:59776"/>
    </ligand>
</feature>
<feature type="binding site" evidence="1">
    <location>
        <position position="267"/>
    </location>
    <ligand>
        <name>D-glyceraldehyde 3-phosphate</name>
        <dbReference type="ChEBI" id="CHEBI:59776"/>
    </ligand>
</feature>
<feature type="binding site" evidence="1">
    <location>
        <begin position="280"/>
        <end position="281"/>
    </location>
    <ligand>
        <name>D-glyceraldehyde 3-phosphate</name>
        <dbReference type="ChEBI" id="CHEBI:59776"/>
    </ligand>
</feature>
<feature type="binding site" evidence="1">
    <location>
        <position position="303"/>
    </location>
    <ligand>
        <name>D-glyceraldehyde 3-phosphate</name>
        <dbReference type="ChEBI" id="CHEBI:59776"/>
    </ligand>
</feature>
<feature type="binding site" evidence="1">
    <location>
        <position position="385"/>
    </location>
    <ligand>
        <name>NADP(+)</name>
        <dbReference type="ChEBI" id="CHEBI:58349"/>
    </ligand>
</feature>
<feature type="site" description="Activates thiol group during catalysis" evidence="1">
    <location>
        <position position="249"/>
    </location>
</feature>
<feature type="sequence conflict" description="In Ref. 2; CAA33264." evidence="3" ref="2">
    <original>G</original>
    <variation>R</variation>
    <location>
        <position position="194"/>
    </location>
</feature>
<dbReference type="EC" id="1.2.1.13"/>
<dbReference type="EMBL" id="X52148">
    <property type="protein sequence ID" value="CAA36396.1"/>
    <property type="molecule type" value="Genomic_DNA"/>
</dbReference>
<dbReference type="EMBL" id="X15190">
    <property type="protein sequence ID" value="CAA33264.1"/>
    <property type="molecule type" value="mRNA"/>
</dbReference>
<dbReference type="PIR" id="S14243">
    <property type="entry name" value="DEPMNA"/>
</dbReference>
<dbReference type="SMR" id="P12858"/>
<dbReference type="DIP" id="DIP-29836N"/>
<dbReference type="IntAct" id="P12858">
    <property type="interactions" value="2"/>
</dbReference>
<dbReference type="EnsemblPlants" id="Psat3g091720.1">
    <property type="protein sequence ID" value="Psat3g091720.1.cds"/>
    <property type="gene ID" value="Psat3g091720"/>
</dbReference>
<dbReference type="Gramene" id="Psat3g091720.1">
    <property type="protein sequence ID" value="Psat3g091720.1.cds"/>
    <property type="gene ID" value="Psat3g091720"/>
</dbReference>
<dbReference type="OrthoDB" id="1152826at2759"/>
<dbReference type="UniPathway" id="UPA00116"/>
<dbReference type="GO" id="GO:0009507">
    <property type="term" value="C:chloroplast"/>
    <property type="evidence" value="ECO:0007669"/>
    <property type="project" value="UniProtKB-SubCell"/>
</dbReference>
<dbReference type="GO" id="GO:0047100">
    <property type="term" value="F:glyceraldehyde-3-phosphate dehydrogenase (NADP+) (phosphorylating) activity"/>
    <property type="evidence" value="ECO:0007669"/>
    <property type="project" value="UniProtKB-EC"/>
</dbReference>
<dbReference type="GO" id="GO:0051287">
    <property type="term" value="F:NAD binding"/>
    <property type="evidence" value="ECO:0007669"/>
    <property type="project" value="InterPro"/>
</dbReference>
<dbReference type="GO" id="GO:0050661">
    <property type="term" value="F:NADP binding"/>
    <property type="evidence" value="ECO:0007669"/>
    <property type="project" value="InterPro"/>
</dbReference>
<dbReference type="GO" id="GO:0006006">
    <property type="term" value="P:glucose metabolic process"/>
    <property type="evidence" value="ECO:0007669"/>
    <property type="project" value="InterPro"/>
</dbReference>
<dbReference type="GO" id="GO:0019253">
    <property type="term" value="P:reductive pentose-phosphate cycle"/>
    <property type="evidence" value="ECO:0007669"/>
    <property type="project" value="UniProtKB-UniPathway"/>
</dbReference>
<dbReference type="CDD" id="cd18126">
    <property type="entry name" value="GAPDH_I_C"/>
    <property type="match status" value="1"/>
</dbReference>
<dbReference type="CDD" id="cd05214">
    <property type="entry name" value="GAPDH_I_N"/>
    <property type="match status" value="1"/>
</dbReference>
<dbReference type="FunFam" id="3.30.360.10:FF:000002">
    <property type="entry name" value="Glyceraldehyde-3-phosphate dehydrogenase"/>
    <property type="match status" value="1"/>
</dbReference>
<dbReference type="FunFam" id="3.40.50.720:FF:000001">
    <property type="entry name" value="Glyceraldehyde-3-phosphate dehydrogenase"/>
    <property type="match status" value="1"/>
</dbReference>
<dbReference type="Gene3D" id="3.30.360.10">
    <property type="entry name" value="Dihydrodipicolinate Reductase, domain 2"/>
    <property type="match status" value="1"/>
</dbReference>
<dbReference type="Gene3D" id="3.40.50.720">
    <property type="entry name" value="NAD(P)-binding Rossmann-like Domain"/>
    <property type="match status" value="1"/>
</dbReference>
<dbReference type="InterPro" id="IPR020831">
    <property type="entry name" value="GlycerAld/Erythrose_P_DH"/>
</dbReference>
<dbReference type="InterPro" id="IPR020830">
    <property type="entry name" value="GlycerAld_3-P_DH_AS"/>
</dbReference>
<dbReference type="InterPro" id="IPR020829">
    <property type="entry name" value="GlycerAld_3-P_DH_cat"/>
</dbReference>
<dbReference type="InterPro" id="IPR020828">
    <property type="entry name" value="GlycerAld_3-P_DH_NAD(P)-bd"/>
</dbReference>
<dbReference type="InterPro" id="IPR006424">
    <property type="entry name" value="Glyceraldehyde-3-P_DH_1"/>
</dbReference>
<dbReference type="InterPro" id="IPR036291">
    <property type="entry name" value="NAD(P)-bd_dom_sf"/>
</dbReference>
<dbReference type="NCBIfam" id="TIGR01534">
    <property type="entry name" value="GAPDH-I"/>
    <property type="match status" value="1"/>
</dbReference>
<dbReference type="PANTHER" id="PTHR43148">
    <property type="entry name" value="GLYCERALDEHYDE-3-PHOSPHATE DEHYDROGENASE 2"/>
    <property type="match status" value="1"/>
</dbReference>
<dbReference type="Pfam" id="PF02800">
    <property type="entry name" value="Gp_dh_C"/>
    <property type="match status" value="1"/>
</dbReference>
<dbReference type="Pfam" id="PF00044">
    <property type="entry name" value="Gp_dh_N"/>
    <property type="match status" value="1"/>
</dbReference>
<dbReference type="PRINTS" id="PR00078">
    <property type="entry name" value="G3PDHDRGNASE"/>
</dbReference>
<dbReference type="SMART" id="SM00846">
    <property type="entry name" value="Gp_dh_N"/>
    <property type="match status" value="1"/>
</dbReference>
<dbReference type="SUPFAM" id="SSF55347">
    <property type="entry name" value="Glyceraldehyde-3-phosphate dehydrogenase-like, C-terminal domain"/>
    <property type="match status" value="1"/>
</dbReference>
<dbReference type="SUPFAM" id="SSF51735">
    <property type="entry name" value="NAD(P)-binding Rossmann-fold domains"/>
    <property type="match status" value="1"/>
</dbReference>
<dbReference type="PROSITE" id="PS00071">
    <property type="entry name" value="GAPDH"/>
    <property type="match status" value="1"/>
</dbReference>
<reference key="1">
    <citation type="journal article" date="1990" name="Proc. Natl. Acad. Sci. U.S.A.">
        <title>Differential intron loss and endosymbiotic transfer of chloroplast glyceraldehyde-3-phosphate dehydrogenase genes to the nucleus.</title>
        <authorList>
            <person name="Liaud M.-F."/>
            <person name="Zhang D.-X."/>
            <person name="Cerff R."/>
        </authorList>
    </citation>
    <scope>NUCLEOTIDE SEQUENCE [GENOMIC DNA]</scope>
    <source>
        <strain>cv. Rosakrone</strain>
        <tissue>Seedling</tissue>
    </source>
</reference>
<reference key="2">
    <citation type="journal article" date="1989" name="Plant Mol. Biol.">
        <title>Cloning and sequence analysis of cDNAs encoding the cytosolic precursors of subunits GapA and GapB of chloroplast glyceraldehyde-3-phosphate dehydrogenase from pea and spinach.</title>
        <authorList>
            <person name="Brinkmann H."/>
            <person name="Cerff R."/>
            <person name="Salomon M."/>
            <person name="Soll J."/>
        </authorList>
    </citation>
    <scope>NUCLEOTIDE SEQUENCE [MRNA]</scope>
    <source>
        <strain>cv. Rosakrone</strain>
        <tissue>Seedling</tissue>
    </source>
</reference>
<keyword id="KW-0113">Calvin cycle</keyword>
<keyword id="KW-0150">Chloroplast</keyword>
<keyword id="KW-0521">NADP</keyword>
<keyword id="KW-0560">Oxidoreductase</keyword>
<keyword id="KW-0934">Plastid</keyword>
<keyword id="KW-0809">Transit peptide</keyword>